<gene>
    <name evidence="1" type="primary">groEL1</name>
    <name evidence="1" type="synonym">groL1</name>
    <name type="ordered locus">MRA_3457</name>
</gene>
<evidence type="ECO:0000255" key="1">
    <source>
        <dbReference type="HAMAP-Rule" id="MF_00600"/>
    </source>
</evidence>
<protein>
    <recommendedName>
        <fullName evidence="1">Chaperonin GroEL 1</fullName>
        <ecNumber evidence="1">5.6.1.7</ecNumber>
    </recommendedName>
    <alternativeName>
        <fullName evidence="1">60 kDa chaperonin 1</fullName>
    </alternativeName>
    <alternativeName>
        <fullName evidence="1">Chaperonin-60 1</fullName>
        <shortName evidence="1">Cpn60 1</shortName>
    </alternativeName>
</protein>
<accession>A5U892</accession>
<sequence>MSKLIEYDETARRAMEVGMDKLADTVRVTLGPRGRHVVLAKAFGGPTVTNDGVTVAREIELEDPFEDLGAQLVKSVATKTNDVAGDGTTTATILAQALIKGGLRLVAAGVNPIALGVGIGKAADAVSEALLASATPVSGKTGIAQVATVSSRDEQIGDLVGEAMSKVGHDGVVSVEESSTLGTELEFTEGIGFDKGFLSAYFVTDFDNQQAVLEDALILLHQDKISSLPDLLPLLEKVAGTGKPLLIVAEDVEGEALATLVVNAIRKTLKAVAVKGPYFGDRRKAFLEDLAVVTGGQVVNPDAGMVLREVGLEVLGSARRVVVSKDDTVIVDGGGTAEAVANRAKHLRAEIDKSDSDWDREKLGERLAKLAGGVAVIKVGAATETALKERKESVEDAVAAAKAAVEEGIVPGGGASLIHQARKALTELRASLTGDEVLGVDVFSEALAAPLFWIAANAGLDGSVVVNKVSELPAGHGLNVNTLSYGDLAADGVIDPVKVTRSAVLNASSVARMVLTTETVVVDKPAKAEDHDHHHGHAH</sequence>
<keyword id="KW-0067">ATP-binding</keyword>
<keyword id="KW-0143">Chaperone</keyword>
<keyword id="KW-0963">Cytoplasm</keyword>
<keyword id="KW-0413">Isomerase</keyword>
<keyword id="KW-0547">Nucleotide-binding</keyword>
<keyword id="KW-1185">Reference proteome</keyword>
<proteinExistence type="inferred from homology"/>
<comment type="function">
    <text evidence="1">Together with its co-chaperonin GroES, plays an essential role in assisting protein folding. The GroEL-GroES system forms a nano-cage that allows encapsulation of the non-native substrate proteins and provides a physical environment optimized to promote and accelerate protein folding.</text>
</comment>
<comment type="catalytic activity">
    <reaction evidence="1">
        <text>ATP + H2O + a folded polypeptide = ADP + phosphate + an unfolded polypeptide.</text>
        <dbReference type="EC" id="5.6.1.7"/>
    </reaction>
</comment>
<comment type="subunit">
    <text evidence="1">Forms a cylinder of 14 subunits composed of two heptameric rings stacked back-to-back. Interacts with the co-chaperonin GroES.</text>
</comment>
<comment type="subcellular location">
    <subcellularLocation>
        <location evidence="1">Cytoplasm</location>
    </subcellularLocation>
</comment>
<comment type="similarity">
    <text evidence="1">Belongs to the chaperonin (HSP60) family.</text>
</comment>
<name>CH601_MYCTA</name>
<organism>
    <name type="scientific">Mycobacterium tuberculosis (strain ATCC 25177 / H37Ra)</name>
    <dbReference type="NCBI Taxonomy" id="419947"/>
    <lineage>
        <taxon>Bacteria</taxon>
        <taxon>Bacillati</taxon>
        <taxon>Actinomycetota</taxon>
        <taxon>Actinomycetes</taxon>
        <taxon>Mycobacteriales</taxon>
        <taxon>Mycobacteriaceae</taxon>
        <taxon>Mycobacterium</taxon>
        <taxon>Mycobacterium tuberculosis complex</taxon>
    </lineage>
</organism>
<dbReference type="EC" id="5.6.1.7" evidence="1"/>
<dbReference type="EMBL" id="CP000611">
    <property type="protein sequence ID" value="ABQ75242.1"/>
    <property type="molecule type" value="Genomic_DNA"/>
</dbReference>
<dbReference type="SMR" id="A5U892"/>
<dbReference type="KEGG" id="mra:MRA_3457"/>
<dbReference type="eggNOG" id="COG0459">
    <property type="taxonomic scope" value="Bacteria"/>
</dbReference>
<dbReference type="HOGENOM" id="CLU_016503_3_0_11"/>
<dbReference type="Proteomes" id="UP000001988">
    <property type="component" value="Chromosome"/>
</dbReference>
<dbReference type="GO" id="GO:0005737">
    <property type="term" value="C:cytoplasm"/>
    <property type="evidence" value="ECO:0007669"/>
    <property type="project" value="UniProtKB-SubCell"/>
</dbReference>
<dbReference type="GO" id="GO:0005524">
    <property type="term" value="F:ATP binding"/>
    <property type="evidence" value="ECO:0007669"/>
    <property type="project" value="UniProtKB-UniRule"/>
</dbReference>
<dbReference type="GO" id="GO:0140662">
    <property type="term" value="F:ATP-dependent protein folding chaperone"/>
    <property type="evidence" value="ECO:0007669"/>
    <property type="project" value="InterPro"/>
</dbReference>
<dbReference type="GO" id="GO:0016853">
    <property type="term" value="F:isomerase activity"/>
    <property type="evidence" value="ECO:0007669"/>
    <property type="project" value="UniProtKB-KW"/>
</dbReference>
<dbReference type="GO" id="GO:0051082">
    <property type="term" value="F:unfolded protein binding"/>
    <property type="evidence" value="ECO:0007669"/>
    <property type="project" value="UniProtKB-UniRule"/>
</dbReference>
<dbReference type="GO" id="GO:0042026">
    <property type="term" value="P:protein refolding"/>
    <property type="evidence" value="ECO:0007669"/>
    <property type="project" value="UniProtKB-UniRule"/>
</dbReference>
<dbReference type="CDD" id="cd03344">
    <property type="entry name" value="GroEL"/>
    <property type="match status" value="1"/>
</dbReference>
<dbReference type="FunFam" id="3.50.7.10:FF:000001">
    <property type="entry name" value="60 kDa chaperonin"/>
    <property type="match status" value="1"/>
</dbReference>
<dbReference type="Gene3D" id="3.50.7.10">
    <property type="entry name" value="GroEL"/>
    <property type="match status" value="1"/>
</dbReference>
<dbReference type="Gene3D" id="1.10.560.10">
    <property type="entry name" value="GroEL-like equatorial domain"/>
    <property type="match status" value="1"/>
</dbReference>
<dbReference type="Gene3D" id="3.30.260.10">
    <property type="entry name" value="TCP-1-like chaperonin intermediate domain"/>
    <property type="match status" value="1"/>
</dbReference>
<dbReference type="HAMAP" id="MF_00600">
    <property type="entry name" value="CH60"/>
    <property type="match status" value="1"/>
</dbReference>
<dbReference type="InterPro" id="IPR018370">
    <property type="entry name" value="Chaperonin_Cpn60_CS"/>
</dbReference>
<dbReference type="InterPro" id="IPR001844">
    <property type="entry name" value="Cpn60/GroEL"/>
</dbReference>
<dbReference type="InterPro" id="IPR002423">
    <property type="entry name" value="Cpn60/GroEL/TCP-1"/>
</dbReference>
<dbReference type="InterPro" id="IPR027409">
    <property type="entry name" value="GroEL-like_apical_dom_sf"/>
</dbReference>
<dbReference type="InterPro" id="IPR027413">
    <property type="entry name" value="GROEL-like_equatorial_sf"/>
</dbReference>
<dbReference type="InterPro" id="IPR027410">
    <property type="entry name" value="TCP-1-like_intermed_sf"/>
</dbReference>
<dbReference type="NCBIfam" id="TIGR02348">
    <property type="entry name" value="GroEL"/>
    <property type="match status" value="1"/>
</dbReference>
<dbReference type="NCBIfam" id="NF000592">
    <property type="entry name" value="PRK00013.1"/>
    <property type="match status" value="1"/>
</dbReference>
<dbReference type="NCBIfam" id="NF009487">
    <property type="entry name" value="PRK12849.1"/>
    <property type="match status" value="1"/>
</dbReference>
<dbReference type="NCBIfam" id="NF009488">
    <property type="entry name" value="PRK12850.1"/>
    <property type="match status" value="1"/>
</dbReference>
<dbReference type="NCBIfam" id="NF009489">
    <property type="entry name" value="PRK12851.1"/>
    <property type="match status" value="1"/>
</dbReference>
<dbReference type="PANTHER" id="PTHR45633">
    <property type="entry name" value="60 KDA HEAT SHOCK PROTEIN, MITOCHONDRIAL"/>
    <property type="match status" value="1"/>
</dbReference>
<dbReference type="Pfam" id="PF00118">
    <property type="entry name" value="Cpn60_TCP1"/>
    <property type="match status" value="1"/>
</dbReference>
<dbReference type="PRINTS" id="PR00298">
    <property type="entry name" value="CHAPERONIN60"/>
</dbReference>
<dbReference type="SUPFAM" id="SSF52029">
    <property type="entry name" value="GroEL apical domain-like"/>
    <property type="match status" value="1"/>
</dbReference>
<dbReference type="SUPFAM" id="SSF48592">
    <property type="entry name" value="GroEL equatorial domain-like"/>
    <property type="match status" value="1"/>
</dbReference>
<dbReference type="SUPFAM" id="SSF54849">
    <property type="entry name" value="GroEL-intermediate domain like"/>
    <property type="match status" value="1"/>
</dbReference>
<dbReference type="PROSITE" id="PS00296">
    <property type="entry name" value="CHAPERONINS_CPN60"/>
    <property type="match status" value="1"/>
</dbReference>
<reference key="1">
    <citation type="journal article" date="2008" name="PLoS ONE">
        <title>Genetic basis of virulence attenuation revealed by comparative genomic analysis of Mycobacterium tuberculosis strain H37Ra versus H37Rv.</title>
        <authorList>
            <person name="Zheng H."/>
            <person name="Lu L."/>
            <person name="Wang B."/>
            <person name="Pu S."/>
            <person name="Zhang X."/>
            <person name="Zhu G."/>
            <person name="Shi W."/>
            <person name="Zhang L."/>
            <person name="Wang H."/>
            <person name="Wang S."/>
            <person name="Zhao G."/>
            <person name="Zhang Y."/>
        </authorList>
    </citation>
    <scope>NUCLEOTIDE SEQUENCE [LARGE SCALE GENOMIC DNA]</scope>
    <source>
        <strain>ATCC 25177 / H37Ra</strain>
    </source>
</reference>
<feature type="chain" id="PRO_0000332027" description="Chaperonin GroEL 1">
    <location>
        <begin position="1"/>
        <end position="539"/>
    </location>
</feature>
<feature type="binding site" evidence="1">
    <location>
        <begin position="29"/>
        <end position="32"/>
    </location>
    <ligand>
        <name>ATP</name>
        <dbReference type="ChEBI" id="CHEBI:30616"/>
    </ligand>
</feature>
<feature type="binding site" evidence="1">
    <location>
        <begin position="86"/>
        <end position="90"/>
    </location>
    <ligand>
        <name>ATP</name>
        <dbReference type="ChEBI" id="CHEBI:30616"/>
    </ligand>
</feature>
<feature type="binding site" evidence="1">
    <location>
        <position position="413"/>
    </location>
    <ligand>
        <name>ATP</name>
        <dbReference type="ChEBI" id="CHEBI:30616"/>
    </ligand>
</feature>
<feature type="binding site" evidence="1">
    <location>
        <position position="495"/>
    </location>
    <ligand>
        <name>ATP</name>
        <dbReference type="ChEBI" id="CHEBI:30616"/>
    </ligand>
</feature>